<proteinExistence type="inferred from homology"/>
<feature type="chain" id="PRO_1000054625" description="Large ribosomal subunit protein uL16">
    <location>
        <begin position="1"/>
        <end position="137"/>
    </location>
</feature>
<dbReference type="EMBL" id="CP000608">
    <property type="protein sequence ID" value="ABO47426.1"/>
    <property type="molecule type" value="Genomic_DNA"/>
</dbReference>
<dbReference type="RefSeq" id="WP_003027191.1">
    <property type="nucleotide sequence ID" value="NC_009257.1"/>
</dbReference>
<dbReference type="SMR" id="A4IZS7"/>
<dbReference type="GeneID" id="75264254"/>
<dbReference type="KEGG" id="ftw:FTW_1750"/>
<dbReference type="HOGENOM" id="CLU_078858_2_1_6"/>
<dbReference type="GO" id="GO:0022625">
    <property type="term" value="C:cytosolic large ribosomal subunit"/>
    <property type="evidence" value="ECO:0007669"/>
    <property type="project" value="TreeGrafter"/>
</dbReference>
<dbReference type="GO" id="GO:0019843">
    <property type="term" value="F:rRNA binding"/>
    <property type="evidence" value="ECO:0007669"/>
    <property type="project" value="UniProtKB-UniRule"/>
</dbReference>
<dbReference type="GO" id="GO:0003735">
    <property type="term" value="F:structural constituent of ribosome"/>
    <property type="evidence" value="ECO:0007669"/>
    <property type="project" value="InterPro"/>
</dbReference>
<dbReference type="GO" id="GO:0000049">
    <property type="term" value="F:tRNA binding"/>
    <property type="evidence" value="ECO:0007669"/>
    <property type="project" value="UniProtKB-KW"/>
</dbReference>
<dbReference type="GO" id="GO:0006412">
    <property type="term" value="P:translation"/>
    <property type="evidence" value="ECO:0007669"/>
    <property type="project" value="UniProtKB-UniRule"/>
</dbReference>
<dbReference type="CDD" id="cd01433">
    <property type="entry name" value="Ribosomal_L16_L10e"/>
    <property type="match status" value="1"/>
</dbReference>
<dbReference type="FunFam" id="3.90.1170.10:FF:000001">
    <property type="entry name" value="50S ribosomal protein L16"/>
    <property type="match status" value="1"/>
</dbReference>
<dbReference type="Gene3D" id="3.90.1170.10">
    <property type="entry name" value="Ribosomal protein L10e/L16"/>
    <property type="match status" value="1"/>
</dbReference>
<dbReference type="HAMAP" id="MF_01342">
    <property type="entry name" value="Ribosomal_uL16"/>
    <property type="match status" value="1"/>
</dbReference>
<dbReference type="InterPro" id="IPR047873">
    <property type="entry name" value="Ribosomal_uL16"/>
</dbReference>
<dbReference type="InterPro" id="IPR000114">
    <property type="entry name" value="Ribosomal_uL16_bact-type"/>
</dbReference>
<dbReference type="InterPro" id="IPR020798">
    <property type="entry name" value="Ribosomal_uL16_CS"/>
</dbReference>
<dbReference type="InterPro" id="IPR016180">
    <property type="entry name" value="Ribosomal_uL16_dom"/>
</dbReference>
<dbReference type="InterPro" id="IPR036920">
    <property type="entry name" value="Ribosomal_uL16_sf"/>
</dbReference>
<dbReference type="NCBIfam" id="TIGR01164">
    <property type="entry name" value="rplP_bact"/>
    <property type="match status" value="1"/>
</dbReference>
<dbReference type="PANTHER" id="PTHR12220">
    <property type="entry name" value="50S/60S RIBOSOMAL PROTEIN L16"/>
    <property type="match status" value="1"/>
</dbReference>
<dbReference type="PANTHER" id="PTHR12220:SF13">
    <property type="entry name" value="LARGE RIBOSOMAL SUBUNIT PROTEIN UL16M"/>
    <property type="match status" value="1"/>
</dbReference>
<dbReference type="Pfam" id="PF00252">
    <property type="entry name" value="Ribosomal_L16"/>
    <property type="match status" value="1"/>
</dbReference>
<dbReference type="PRINTS" id="PR00060">
    <property type="entry name" value="RIBOSOMALL16"/>
</dbReference>
<dbReference type="SUPFAM" id="SSF54686">
    <property type="entry name" value="Ribosomal protein L16p/L10e"/>
    <property type="match status" value="1"/>
</dbReference>
<dbReference type="PROSITE" id="PS00586">
    <property type="entry name" value="RIBOSOMAL_L16_1"/>
    <property type="match status" value="1"/>
</dbReference>
<dbReference type="PROSITE" id="PS00701">
    <property type="entry name" value="RIBOSOMAL_L16_2"/>
    <property type="match status" value="1"/>
</dbReference>
<evidence type="ECO:0000255" key="1">
    <source>
        <dbReference type="HAMAP-Rule" id="MF_01342"/>
    </source>
</evidence>
<evidence type="ECO:0000305" key="2"/>
<comment type="function">
    <text evidence="1">Binds 23S rRNA and is also seen to make contacts with the A and possibly P site tRNAs.</text>
</comment>
<comment type="subunit">
    <text evidence="1">Part of the 50S ribosomal subunit.</text>
</comment>
<comment type="similarity">
    <text evidence="1">Belongs to the universal ribosomal protein uL16 family.</text>
</comment>
<sequence length="137" mass="15684">MLQPKRTKFRKQQKLRNRGLAHRGNKVSFGEFGLQATSRGRITARQIEAGRRAISRHIKRGGKIWIRIFPDKPITQKPLEVRMGKGKGSVEYWVAQIQPGRVLYEITGVKEELAREAFARAAAKMPVQTTFVEKQVM</sequence>
<organism>
    <name type="scientific">Francisella tularensis subsp. tularensis (strain WY96-3418)</name>
    <dbReference type="NCBI Taxonomy" id="418136"/>
    <lineage>
        <taxon>Bacteria</taxon>
        <taxon>Pseudomonadati</taxon>
        <taxon>Pseudomonadota</taxon>
        <taxon>Gammaproteobacteria</taxon>
        <taxon>Thiotrichales</taxon>
        <taxon>Francisellaceae</taxon>
        <taxon>Francisella</taxon>
    </lineage>
</organism>
<name>RL16_FRATW</name>
<protein>
    <recommendedName>
        <fullName evidence="1">Large ribosomal subunit protein uL16</fullName>
    </recommendedName>
    <alternativeName>
        <fullName evidence="2">50S ribosomal protein L16</fullName>
    </alternativeName>
</protein>
<reference key="1">
    <citation type="journal article" date="2007" name="PLoS ONE">
        <title>Complete genomic characterization of a pathogenic A.II strain of Francisella tularensis subspecies tularensis.</title>
        <authorList>
            <person name="Beckstrom-Sternberg S.M."/>
            <person name="Auerbach R.K."/>
            <person name="Godbole S."/>
            <person name="Pearson J.V."/>
            <person name="Beckstrom-Sternberg J.S."/>
            <person name="Deng Z."/>
            <person name="Munk C."/>
            <person name="Kubota K."/>
            <person name="Zhou Y."/>
            <person name="Bruce D."/>
            <person name="Noronha J."/>
            <person name="Scheuermann R.H."/>
            <person name="Wang A."/>
            <person name="Wei X."/>
            <person name="Wang J."/>
            <person name="Hao J."/>
            <person name="Wagner D.M."/>
            <person name="Brettin T.S."/>
            <person name="Brown N."/>
            <person name="Gilna P."/>
            <person name="Keim P.S."/>
        </authorList>
    </citation>
    <scope>NUCLEOTIDE SEQUENCE [LARGE SCALE GENOMIC DNA]</scope>
    <source>
        <strain>WY96-3418</strain>
    </source>
</reference>
<accession>A4IZS7</accession>
<gene>
    <name evidence="1" type="primary">rplP</name>
    <name type="ordered locus">FTW_1750</name>
</gene>
<keyword id="KW-0687">Ribonucleoprotein</keyword>
<keyword id="KW-0689">Ribosomal protein</keyword>
<keyword id="KW-0694">RNA-binding</keyword>
<keyword id="KW-0699">rRNA-binding</keyword>
<keyword id="KW-0820">tRNA-binding</keyword>